<name>ASTB_ACIBY</name>
<comment type="function">
    <text evidence="1">Catalyzes the hydrolysis of N(2)-succinylarginine into N(2)-succinylornithine, ammonia and CO(2).</text>
</comment>
<comment type="catalytic activity">
    <reaction evidence="1">
        <text>N(2)-succinyl-L-arginine + 2 H2O + 2 H(+) = N(2)-succinyl-L-ornithine + 2 NH4(+) + CO2</text>
        <dbReference type="Rhea" id="RHEA:19533"/>
        <dbReference type="ChEBI" id="CHEBI:15377"/>
        <dbReference type="ChEBI" id="CHEBI:15378"/>
        <dbReference type="ChEBI" id="CHEBI:16526"/>
        <dbReference type="ChEBI" id="CHEBI:28938"/>
        <dbReference type="ChEBI" id="CHEBI:58241"/>
        <dbReference type="ChEBI" id="CHEBI:58514"/>
        <dbReference type="EC" id="3.5.3.23"/>
    </reaction>
</comment>
<comment type="pathway">
    <text evidence="1">Amino-acid degradation; L-arginine degradation via AST pathway; L-glutamate and succinate from L-arginine: step 2/5.</text>
</comment>
<comment type="subunit">
    <text evidence="1">Homodimer.</text>
</comment>
<comment type="similarity">
    <text evidence="1">Belongs to the succinylarginine dihydrolase family.</text>
</comment>
<keyword id="KW-0056">Arginine metabolism</keyword>
<keyword id="KW-0378">Hydrolase</keyword>
<reference key="1">
    <citation type="journal article" date="2008" name="PLoS ONE">
        <title>Comparative analysis of Acinetobacters: three genomes for three lifestyles.</title>
        <authorList>
            <person name="Vallenet D."/>
            <person name="Nordmann P."/>
            <person name="Barbe V."/>
            <person name="Poirel L."/>
            <person name="Mangenot S."/>
            <person name="Bataille E."/>
            <person name="Dossat C."/>
            <person name="Gas S."/>
            <person name="Kreimeyer A."/>
            <person name="Lenoble P."/>
            <person name="Oztas S."/>
            <person name="Poulain J."/>
            <person name="Segurens B."/>
            <person name="Robert C."/>
            <person name="Abergel C."/>
            <person name="Claverie J.-M."/>
            <person name="Raoult D."/>
            <person name="Medigue C."/>
            <person name="Weissenbach J."/>
            <person name="Cruveiller S."/>
        </authorList>
    </citation>
    <scope>NUCLEOTIDE SEQUENCE [LARGE SCALE GENOMIC DNA]</scope>
    <source>
        <strain>AYE</strain>
    </source>
</reference>
<feature type="chain" id="PRO_1000138000" description="N-succinylarginine dihydrolase">
    <location>
        <begin position="1"/>
        <end position="447"/>
    </location>
</feature>
<feature type="active site" evidence="1">
    <location>
        <position position="174"/>
    </location>
</feature>
<feature type="active site" evidence="1">
    <location>
        <position position="250"/>
    </location>
</feature>
<feature type="active site" description="Nucleophile" evidence="1">
    <location>
        <position position="371"/>
    </location>
</feature>
<feature type="binding site" evidence="1">
    <location>
        <begin position="19"/>
        <end position="28"/>
    </location>
    <ligand>
        <name>substrate</name>
    </ligand>
</feature>
<feature type="binding site" evidence="1">
    <location>
        <position position="110"/>
    </location>
    <ligand>
        <name>substrate</name>
    </ligand>
</feature>
<feature type="binding site" evidence="1">
    <location>
        <begin position="137"/>
        <end position="138"/>
    </location>
    <ligand>
        <name>substrate</name>
    </ligand>
</feature>
<feature type="binding site" evidence="1">
    <location>
        <position position="214"/>
    </location>
    <ligand>
        <name>substrate</name>
    </ligand>
</feature>
<feature type="binding site" evidence="1">
    <location>
        <position position="252"/>
    </location>
    <ligand>
        <name>substrate</name>
    </ligand>
</feature>
<feature type="binding site" evidence="1">
    <location>
        <position position="365"/>
    </location>
    <ligand>
        <name>substrate</name>
    </ligand>
</feature>
<gene>
    <name evidence="1" type="primary">astB</name>
    <name type="ordered locus">ABAYE0355</name>
</gene>
<accession>B0V7X3</accession>
<organism>
    <name type="scientific">Acinetobacter baumannii (strain AYE)</name>
    <dbReference type="NCBI Taxonomy" id="509173"/>
    <lineage>
        <taxon>Bacteria</taxon>
        <taxon>Pseudomonadati</taxon>
        <taxon>Pseudomonadota</taxon>
        <taxon>Gammaproteobacteria</taxon>
        <taxon>Moraxellales</taxon>
        <taxon>Moraxellaceae</taxon>
        <taxon>Acinetobacter</taxon>
        <taxon>Acinetobacter calcoaceticus/baumannii complex</taxon>
    </lineage>
</organism>
<protein>
    <recommendedName>
        <fullName evidence="1">N-succinylarginine dihydrolase</fullName>
        <ecNumber evidence="1">3.5.3.23</ecNumber>
    </recommendedName>
</protein>
<evidence type="ECO:0000255" key="1">
    <source>
        <dbReference type="HAMAP-Rule" id="MF_01172"/>
    </source>
</evidence>
<sequence length="447" mass="49865">MKGYEVNFDGLVGPTHHYAGLSFGNEASTKNRNNLSNPKLAAKQGLLKMKALADMGMKQGVLAPHERPHVPMLRRLGFTGDDISVVAQAMRYSPELLSSLSSASPMWTANAATVSPSADSQDERVHFTAANLNNKFHRSIEAETTSQVLQAIFKNERHFVHHEALPQVALFGDEGAANHNRLGGDYAKRGVQVFVYGQQHLNNGLPGPKRYPARQTREASEAIARLHRLDEAHTVFVQQNPDVIDQGVFHNDVIAVSNQQVLFHHQHAFLNQDQAFAEIRQKMASIGEDFISIEVPENRVTVDDAVATYLFNSQILTRPDGGMTIVVPEESRQNAAVWSYLNDMIQMGTPIDAIQVYDLRESMRNGGGPACLRLRVALNETELNAVNPKVLMNDQLFMTLNQWVDKHYRDRLAQEDLADPHLLMESRMALDELTKILGLGSVYPFQK</sequence>
<proteinExistence type="inferred from homology"/>
<dbReference type="EC" id="3.5.3.23" evidence="1"/>
<dbReference type="EMBL" id="CU459141">
    <property type="protein sequence ID" value="CAM85331.1"/>
    <property type="molecule type" value="Genomic_DNA"/>
</dbReference>
<dbReference type="RefSeq" id="WP_000679450.1">
    <property type="nucleotide sequence ID" value="NZ_JBDGFB010000011.1"/>
</dbReference>
<dbReference type="SMR" id="B0V7X3"/>
<dbReference type="EnsemblBacteria" id="CAM85331">
    <property type="protein sequence ID" value="CAM85331"/>
    <property type="gene ID" value="ABAYE0355"/>
</dbReference>
<dbReference type="GeneID" id="92895367"/>
<dbReference type="KEGG" id="aby:ABAYE0355"/>
<dbReference type="HOGENOM" id="CLU_053835_0_0_6"/>
<dbReference type="UniPathway" id="UPA00185">
    <property type="reaction ID" value="UER00280"/>
</dbReference>
<dbReference type="GO" id="GO:0009015">
    <property type="term" value="F:N-succinylarginine dihydrolase activity"/>
    <property type="evidence" value="ECO:0007669"/>
    <property type="project" value="UniProtKB-UniRule"/>
</dbReference>
<dbReference type="GO" id="GO:0019544">
    <property type="term" value="P:arginine catabolic process to glutamate"/>
    <property type="evidence" value="ECO:0007669"/>
    <property type="project" value="UniProtKB-UniRule"/>
</dbReference>
<dbReference type="GO" id="GO:0019545">
    <property type="term" value="P:arginine catabolic process to succinate"/>
    <property type="evidence" value="ECO:0007669"/>
    <property type="project" value="UniProtKB-UniRule"/>
</dbReference>
<dbReference type="Gene3D" id="3.75.10.20">
    <property type="entry name" value="Succinylarginine dihydrolase"/>
    <property type="match status" value="1"/>
</dbReference>
<dbReference type="HAMAP" id="MF_01172">
    <property type="entry name" value="AstB"/>
    <property type="match status" value="1"/>
</dbReference>
<dbReference type="InterPro" id="IPR037031">
    <property type="entry name" value="AstB_sf"/>
</dbReference>
<dbReference type="InterPro" id="IPR007079">
    <property type="entry name" value="SuccinylArg_d-Hdrlase_AstB"/>
</dbReference>
<dbReference type="NCBIfam" id="TIGR03241">
    <property type="entry name" value="arg_catab_astB"/>
    <property type="match status" value="1"/>
</dbReference>
<dbReference type="NCBIfam" id="NF009789">
    <property type="entry name" value="PRK13281.1"/>
    <property type="match status" value="1"/>
</dbReference>
<dbReference type="PANTHER" id="PTHR30420">
    <property type="entry name" value="N-SUCCINYLARGININE DIHYDROLASE"/>
    <property type="match status" value="1"/>
</dbReference>
<dbReference type="PANTHER" id="PTHR30420:SF2">
    <property type="entry name" value="N-SUCCINYLARGININE DIHYDROLASE"/>
    <property type="match status" value="1"/>
</dbReference>
<dbReference type="Pfam" id="PF04996">
    <property type="entry name" value="AstB"/>
    <property type="match status" value="1"/>
</dbReference>
<dbReference type="SUPFAM" id="SSF55909">
    <property type="entry name" value="Pentein"/>
    <property type="match status" value="1"/>
</dbReference>